<organismHost>
    <name type="scientific">Rattus norvegicus</name>
    <name type="common">Rat</name>
    <dbReference type="NCBI Taxonomy" id="10116"/>
</organismHost>
<reference key="1">
    <citation type="journal article" date="2000" name="Clin. Diagn. Lab. Immunol.">
        <title>Primary structure of the sialodacryoadenitis virus genome: sequence of the structural-protein region and its application for differential diagnosis.</title>
        <authorList>
            <person name="Yoo D."/>
            <person name="Pei Y."/>
            <person name="Christie N."/>
            <person name="Cooper M."/>
        </authorList>
    </citation>
    <scope>NUCLEOTIDE SEQUENCE [GENOMIC RNA]</scope>
</reference>
<gene>
    <name type="ORF">2a</name>
</gene>
<organism>
    <name type="scientific">Rat coronavirus (strain 681)</name>
    <name type="common">RCV-SDAV</name>
    <name type="synonym">Sialodacryoadenitis virus SDAV-681</name>
    <dbReference type="NCBI Taxonomy" id="33740"/>
    <lineage>
        <taxon>Viruses</taxon>
        <taxon>Riboviria</taxon>
        <taxon>Orthornavirae</taxon>
        <taxon>Pisuviricota</taxon>
        <taxon>Pisoniviricetes</taxon>
        <taxon>Nidovirales</taxon>
        <taxon>Cornidovirineae</taxon>
        <taxon>Coronaviridae</taxon>
        <taxon>Orthocoronavirinae</taxon>
        <taxon>Betacoronavirus</taxon>
        <taxon>Embecovirus</taxon>
        <taxon>Murine coronavirus</taxon>
    </lineage>
</organism>
<feature type="chain" id="PRO_0000283938" description="Non-structural protein 2a">
    <location>
        <begin position="1"/>
        <end position="265"/>
    </location>
</feature>
<name>NS2A_CVRSD</name>
<accession>Q9IKD3</accession>
<evidence type="ECO:0000305" key="1"/>
<protein>
    <recommendedName>
        <fullName>Non-structural protein 2a</fullName>
        <shortName>ns2a</shortName>
    </recommendedName>
    <alternativeName>
        <fullName>32 kDa accessory protein</fullName>
    </alternativeName>
    <alternativeName>
        <fullName>32 kDa non-structural protein</fullName>
    </alternativeName>
    <alternativeName>
        <fullName>ns2</fullName>
    </alternativeName>
</protein>
<sequence>MAAKMAFADKPNHFINFPLAQFSGFMGKYLKLQSQLVEMGLDCKLQKAPHVSITMLDIKADQYKQVEFAIQEILDDLAAYEGYIVFDKPHMLGRCLVLDVKGFEELHVDIVEILRKMGCTADQSREWIPHCTVAQFEEEKEINAMQFYYKLPFYLKHNNILTDSRLELVKIGSSKIDGFYCSELSVWCGERLCYKPPTPKFSDIFGYCCIEKIRGDLEIGDLPQDDEEAWAELSYHYQRNTYFFRYVHDNSIYFRIVCRMKGCMC</sequence>
<dbReference type="EMBL" id="AF207551">
    <property type="protein sequence ID" value="AAF97736.1"/>
    <property type="molecule type" value="Genomic_RNA"/>
</dbReference>
<dbReference type="SMR" id="Q9IKD3"/>
<dbReference type="Gene3D" id="3.90.1140.10">
    <property type="entry name" value="Cyclic phosphodiesterase"/>
    <property type="match status" value="1"/>
</dbReference>
<dbReference type="InterPro" id="IPR007878">
    <property type="entry name" value="Coronavirus_NS2A"/>
</dbReference>
<dbReference type="InterPro" id="IPR039573">
    <property type="entry name" value="NS2A-like"/>
</dbReference>
<dbReference type="Pfam" id="PF05213">
    <property type="entry name" value="Corona_NS2A"/>
    <property type="match status" value="1"/>
</dbReference>
<dbReference type="PIRSF" id="PIRSF003890">
    <property type="entry name" value="LigT_coronavirus"/>
    <property type="match status" value="1"/>
</dbReference>
<proteinExistence type="inferred from homology"/>
<comment type="similarity">
    <text evidence="1">Belongs to the coronaviruses ns2a protein family.</text>
</comment>